<accession>P87056</accession>
<name>YDJ8_SCHPO</name>
<comment type="subcellular location">
    <subcellularLocation>
        <location evidence="2">Endoplasmic reticulum membrane</location>
        <topology evidence="2 3">Single-pass type II membrane protein</topology>
    </subcellularLocation>
</comment>
<comment type="similarity">
    <text evidence="2">Belongs to the AB hydrolase superfamily.</text>
</comment>
<gene>
    <name type="ORF">SPAC57A10.08c</name>
</gene>
<organism>
    <name type="scientific">Schizosaccharomyces pombe (strain 972 / ATCC 24843)</name>
    <name type="common">Fission yeast</name>
    <dbReference type="NCBI Taxonomy" id="284812"/>
    <lineage>
        <taxon>Eukaryota</taxon>
        <taxon>Fungi</taxon>
        <taxon>Dikarya</taxon>
        <taxon>Ascomycota</taxon>
        <taxon>Taphrinomycotina</taxon>
        <taxon>Schizosaccharomycetes</taxon>
        <taxon>Schizosaccharomycetales</taxon>
        <taxon>Schizosaccharomycetaceae</taxon>
        <taxon>Schizosaccharomyces</taxon>
    </lineage>
</organism>
<sequence length="364" mass="41809">MYFFTISRLTSFISYGILGALGILTFLYLYDAYLAKSFQRLVIERRSKRESLSKNLSPNDNSHNSKIDISSDYQLLNEYKVAYYLRPGIIPLNHNLAKQEVFVFLHGLGGQMSQFQKVMSYFPPTACLFSFDYWGCGLSRQAFPNQRIGSVDQLTTKGLSKLTYKVLEKLFPENTQFILIGHSMGATIASRVSKMLQTRCTALLLLNPKIRFTSKEISMIVRLRKTPNAFISLYRLLDRFHGLRSSSVTRSLSKNIKGDGDAVRAQLWLWNRQSNTKIWKTMLMGLEELLEPGFHFPKCPILILFGEFDPVSSLKDKVFFQDYPGNYTFKEIDTGHCSMLEQPSEVYNCIDSFLDKFSTTDHNI</sequence>
<keyword id="KW-0256">Endoplasmic reticulum</keyword>
<keyword id="KW-0325">Glycoprotein</keyword>
<keyword id="KW-0378">Hydrolase</keyword>
<keyword id="KW-0472">Membrane</keyword>
<keyword id="KW-1185">Reference proteome</keyword>
<keyword id="KW-0735">Signal-anchor</keyword>
<keyword id="KW-0812">Transmembrane</keyword>
<keyword id="KW-1133">Transmembrane helix</keyword>
<dbReference type="EC" id="3.-.-.-"/>
<dbReference type="EMBL" id="CU329670">
    <property type="protein sequence ID" value="CAB08171.2"/>
    <property type="molecule type" value="Genomic_DNA"/>
</dbReference>
<dbReference type="PIR" id="T38935">
    <property type="entry name" value="T38935"/>
</dbReference>
<dbReference type="RefSeq" id="NP_593313.1">
    <property type="nucleotide sequence ID" value="NM_001018744.2"/>
</dbReference>
<dbReference type="SMR" id="P87056"/>
<dbReference type="BioGRID" id="279277">
    <property type="interactions" value="9"/>
</dbReference>
<dbReference type="STRING" id="284812.P87056"/>
<dbReference type="ESTHER" id="schpo-C57A10.08C">
    <property type="family name" value="AlphaBeta_hydrolase"/>
</dbReference>
<dbReference type="iPTMnet" id="P87056"/>
<dbReference type="PaxDb" id="4896-SPAC57A10.08c.1"/>
<dbReference type="EnsemblFungi" id="SPAC57A10.08c.1">
    <property type="protein sequence ID" value="SPAC57A10.08c.1:pep"/>
    <property type="gene ID" value="SPAC57A10.08c"/>
</dbReference>
<dbReference type="KEGG" id="spo:2542830"/>
<dbReference type="PomBase" id="SPAC57A10.08c"/>
<dbReference type="VEuPathDB" id="FungiDB:SPAC57A10.08c"/>
<dbReference type="eggNOG" id="ENOG502SB79">
    <property type="taxonomic scope" value="Eukaryota"/>
</dbReference>
<dbReference type="HOGENOM" id="CLU_761078_0_0_1"/>
<dbReference type="InParanoid" id="P87056"/>
<dbReference type="OMA" id="IWNRESD"/>
<dbReference type="PhylomeDB" id="P87056"/>
<dbReference type="PRO" id="PR:P87056"/>
<dbReference type="Proteomes" id="UP000002485">
    <property type="component" value="Chromosome I"/>
</dbReference>
<dbReference type="GO" id="GO:0005783">
    <property type="term" value="C:endoplasmic reticulum"/>
    <property type="evidence" value="ECO:0007005"/>
    <property type="project" value="PomBase"/>
</dbReference>
<dbReference type="GO" id="GO:0005789">
    <property type="term" value="C:endoplasmic reticulum membrane"/>
    <property type="evidence" value="ECO:0007669"/>
    <property type="project" value="UniProtKB-SubCell"/>
</dbReference>
<dbReference type="GO" id="GO:0005811">
    <property type="term" value="C:lipid droplet"/>
    <property type="evidence" value="ECO:0000266"/>
    <property type="project" value="PomBase"/>
</dbReference>
<dbReference type="GO" id="GO:0004806">
    <property type="term" value="F:triacylglycerol lipase activity"/>
    <property type="evidence" value="ECO:0000318"/>
    <property type="project" value="GO_Central"/>
</dbReference>
<dbReference type="GO" id="GO:0019433">
    <property type="term" value="P:triglyceride catabolic process"/>
    <property type="evidence" value="ECO:0000318"/>
    <property type="project" value="GO_Central"/>
</dbReference>
<dbReference type="Gene3D" id="3.40.50.1820">
    <property type="entry name" value="alpha/beta hydrolase"/>
    <property type="match status" value="1"/>
</dbReference>
<dbReference type="InterPro" id="IPR000073">
    <property type="entry name" value="AB_hydrolase_1"/>
</dbReference>
<dbReference type="InterPro" id="IPR029058">
    <property type="entry name" value="AB_hydrolase_fold"/>
</dbReference>
<dbReference type="InterPro" id="IPR050228">
    <property type="entry name" value="Carboxylesterase_BioH"/>
</dbReference>
<dbReference type="PANTHER" id="PTHR43194">
    <property type="entry name" value="HYDROLASE ALPHA/BETA FOLD FAMILY"/>
    <property type="match status" value="1"/>
</dbReference>
<dbReference type="PANTHER" id="PTHR43194:SF2">
    <property type="entry name" value="PEROXISOMAL MEMBRANE PROTEIN LPX1"/>
    <property type="match status" value="1"/>
</dbReference>
<dbReference type="Pfam" id="PF00561">
    <property type="entry name" value="Abhydrolase_1"/>
    <property type="match status" value="1"/>
</dbReference>
<dbReference type="SUPFAM" id="SSF53474">
    <property type="entry name" value="alpha/beta-Hydrolases"/>
    <property type="match status" value="1"/>
</dbReference>
<evidence type="ECO:0000250" key="1"/>
<evidence type="ECO:0000255" key="2"/>
<evidence type="ECO:0000269" key="3">
    <source>
    </source>
</evidence>
<evidence type="ECO:0000305" key="4"/>
<evidence type="ECO:0000312" key="5">
    <source>
        <dbReference type="EMBL" id="CAB08171.2"/>
    </source>
</evidence>
<reference evidence="5" key="1">
    <citation type="journal article" date="2002" name="Nature">
        <title>The genome sequence of Schizosaccharomyces pombe.</title>
        <authorList>
            <person name="Wood V."/>
            <person name="Gwilliam R."/>
            <person name="Rajandream M.A."/>
            <person name="Lyne M.H."/>
            <person name="Lyne R."/>
            <person name="Stewart A."/>
            <person name="Sgouros J.G."/>
            <person name="Peat N."/>
            <person name="Hayles J."/>
            <person name="Baker S.G."/>
            <person name="Basham D."/>
            <person name="Bowman S."/>
            <person name="Brooks K."/>
            <person name="Brown D."/>
            <person name="Brown S."/>
            <person name="Chillingworth T."/>
            <person name="Churcher C.M."/>
            <person name="Collins M."/>
            <person name="Connor R."/>
            <person name="Cronin A."/>
            <person name="Davis P."/>
            <person name="Feltwell T."/>
            <person name="Fraser A."/>
            <person name="Gentles S."/>
            <person name="Goble A."/>
            <person name="Hamlin N."/>
            <person name="Harris D.E."/>
            <person name="Hidalgo J."/>
            <person name="Hodgson G."/>
            <person name="Holroyd S."/>
            <person name="Hornsby T."/>
            <person name="Howarth S."/>
            <person name="Huckle E.J."/>
            <person name="Hunt S."/>
            <person name="Jagels K."/>
            <person name="James K.D."/>
            <person name="Jones L."/>
            <person name="Jones M."/>
            <person name="Leather S."/>
            <person name="McDonald S."/>
            <person name="McLean J."/>
            <person name="Mooney P."/>
            <person name="Moule S."/>
            <person name="Mungall K.L."/>
            <person name="Murphy L.D."/>
            <person name="Niblett D."/>
            <person name="Odell C."/>
            <person name="Oliver K."/>
            <person name="O'Neil S."/>
            <person name="Pearson D."/>
            <person name="Quail M.A."/>
            <person name="Rabbinowitsch E."/>
            <person name="Rutherford K.M."/>
            <person name="Rutter S."/>
            <person name="Saunders D."/>
            <person name="Seeger K."/>
            <person name="Sharp S."/>
            <person name="Skelton J."/>
            <person name="Simmonds M.N."/>
            <person name="Squares R."/>
            <person name="Squares S."/>
            <person name="Stevens K."/>
            <person name="Taylor K."/>
            <person name="Taylor R.G."/>
            <person name="Tivey A."/>
            <person name="Walsh S.V."/>
            <person name="Warren T."/>
            <person name="Whitehead S."/>
            <person name="Woodward J.R."/>
            <person name="Volckaert G."/>
            <person name="Aert R."/>
            <person name="Robben J."/>
            <person name="Grymonprez B."/>
            <person name="Weltjens I."/>
            <person name="Vanstreels E."/>
            <person name="Rieger M."/>
            <person name="Schaefer M."/>
            <person name="Mueller-Auer S."/>
            <person name="Gabel C."/>
            <person name="Fuchs M."/>
            <person name="Duesterhoeft A."/>
            <person name="Fritzc C."/>
            <person name="Holzer E."/>
            <person name="Moestl D."/>
            <person name="Hilbert H."/>
            <person name="Borzym K."/>
            <person name="Langer I."/>
            <person name="Beck A."/>
            <person name="Lehrach H."/>
            <person name="Reinhardt R."/>
            <person name="Pohl T.M."/>
            <person name="Eger P."/>
            <person name="Zimmermann W."/>
            <person name="Wedler H."/>
            <person name="Wambutt R."/>
            <person name="Purnelle B."/>
            <person name="Goffeau A."/>
            <person name="Cadieu E."/>
            <person name="Dreano S."/>
            <person name="Gloux S."/>
            <person name="Lelaure V."/>
            <person name="Mottier S."/>
            <person name="Galibert F."/>
            <person name="Aves S.J."/>
            <person name="Xiang Z."/>
            <person name="Hunt C."/>
            <person name="Moore K."/>
            <person name="Hurst S.M."/>
            <person name="Lucas M."/>
            <person name="Rochet M."/>
            <person name="Gaillardin C."/>
            <person name="Tallada V.A."/>
            <person name="Garzon A."/>
            <person name="Thode G."/>
            <person name="Daga R.R."/>
            <person name="Cruzado L."/>
            <person name="Jimenez J."/>
            <person name="Sanchez M."/>
            <person name="del Rey F."/>
            <person name="Benito J."/>
            <person name="Dominguez A."/>
            <person name="Revuelta J.L."/>
            <person name="Moreno S."/>
            <person name="Armstrong J."/>
            <person name="Forsburg S.L."/>
            <person name="Cerutti L."/>
            <person name="Lowe T."/>
            <person name="McCombie W.R."/>
            <person name="Paulsen I."/>
            <person name="Potashkin J."/>
            <person name="Shpakovski G.V."/>
            <person name="Ussery D."/>
            <person name="Barrell B.G."/>
            <person name="Nurse P."/>
        </authorList>
    </citation>
    <scope>NUCLEOTIDE SEQUENCE [LARGE SCALE GENOMIC DNA]</scope>
    <source>
        <strain>972 / ATCC 24843</strain>
    </source>
</reference>
<reference evidence="4" key="2">
    <citation type="journal article" date="2006" name="Nat. Biotechnol.">
        <title>ORFeome cloning and global analysis of protein localization in the fission yeast Schizosaccharomyces pombe.</title>
        <authorList>
            <person name="Matsuyama A."/>
            <person name="Arai R."/>
            <person name="Yashiroda Y."/>
            <person name="Shirai A."/>
            <person name="Kamata A."/>
            <person name="Sekido S."/>
            <person name="Kobayashi Y."/>
            <person name="Hashimoto A."/>
            <person name="Hamamoto M."/>
            <person name="Hiraoka Y."/>
            <person name="Horinouchi S."/>
            <person name="Yoshida M."/>
        </authorList>
    </citation>
    <scope>SUBCELLULAR LOCATION [LARGE SCALE ANALYSIS]</scope>
</reference>
<protein>
    <recommendedName>
        <fullName>Abhydrolase domain-containing protein C57A10.08c</fullName>
        <ecNumber>3.-.-.-</ecNumber>
    </recommendedName>
</protein>
<proteinExistence type="inferred from homology"/>
<feature type="chain" id="PRO_0000312658" description="Abhydrolase domain-containing protein C57A10.08c">
    <location>
        <begin position="1"/>
        <end position="364"/>
    </location>
</feature>
<feature type="topological domain" description="Cytoplasmic" evidence="2">
    <location>
        <begin position="1"/>
        <end position="8"/>
    </location>
</feature>
<feature type="transmembrane region" description="Helical; Signal-anchor for type II membrane protein" evidence="2">
    <location>
        <begin position="9"/>
        <end position="29"/>
    </location>
</feature>
<feature type="topological domain" description="Lumenal" evidence="2">
    <location>
        <begin position="30"/>
        <end position="364"/>
    </location>
</feature>
<feature type="active site" description="Charge relay system" evidence="1">
    <location>
        <position position="183"/>
    </location>
</feature>
<feature type="active site" description="Charge relay system" evidence="1">
    <location>
        <position position="336"/>
    </location>
</feature>
<feature type="glycosylation site" description="N-linked (GlcNAc...) asparagine" evidence="2">
    <location>
        <position position="326"/>
    </location>
</feature>